<proteinExistence type="inferred from homology"/>
<evidence type="ECO:0000255" key="1">
    <source>
        <dbReference type="HAMAP-Rule" id="MF_01241"/>
    </source>
</evidence>
<sequence length="247" mass="27246">MNIIHVKNYEEMSQKAAALLFERIQQSPKITLGLATGGTPENTYTALIAKAKENGQSFSHVQTFNLDEYVGLPAEDKNSYRHYMEQRLFDHIDIPKEKTHLPNGMAPSLEEECRAYENMIADAGGIDIQLLGIGSNGHIGFNEPGTPFSSKTHVVELAEETRKANARYFPTLEDVPKQAITMGIQTIMEAKEILLLISGKAKAEAFAKLCSDEVTEAFPASILNKHPNVTVIADEEAASVYTQKAHL</sequence>
<protein>
    <recommendedName>
        <fullName evidence="1">Glucosamine-6-phosphate deaminase</fullName>
        <ecNumber evidence="1">3.5.99.6</ecNumber>
    </recommendedName>
    <alternativeName>
        <fullName evidence="1">GlcN6P deaminase</fullName>
        <shortName evidence="1">GNPDA</shortName>
    </alternativeName>
    <alternativeName>
        <fullName evidence="1">Glucosamine-6-phosphate isomerase</fullName>
    </alternativeName>
</protein>
<feature type="chain" id="PRO_1000066961" description="Glucosamine-6-phosphate deaminase">
    <location>
        <begin position="1"/>
        <end position="247"/>
    </location>
</feature>
<feature type="active site" description="Proton acceptor; for enolization step" evidence="1">
    <location>
        <position position="67"/>
    </location>
</feature>
<feature type="active site" description="For ring-opening step" evidence="1">
    <location>
        <position position="136"/>
    </location>
</feature>
<feature type="active site" description="Proton acceptor; for ring-opening step" evidence="1">
    <location>
        <position position="138"/>
    </location>
</feature>
<feature type="active site" description="For ring-opening step" evidence="1">
    <location>
        <position position="143"/>
    </location>
</feature>
<accession>Q5WHY0</accession>
<dbReference type="EC" id="3.5.99.6" evidence="1"/>
<dbReference type="EMBL" id="AP006627">
    <property type="protein sequence ID" value="BAD64025.1"/>
    <property type="molecule type" value="Genomic_DNA"/>
</dbReference>
<dbReference type="RefSeq" id="WP_011246334.1">
    <property type="nucleotide sequence ID" value="NC_006582.1"/>
</dbReference>
<dbReference type="SMR" id="Q5WHY0"/>
<dbReference type="STRING" id="66692.ABC1490"/>
<dbReference type="KEGG" id="bcl:ABC1490"/>
<dbReference type="eggNOG" id="COG0363">
    <property type="taxonomic scope" value="Bacteria"/>
</dbReference>
<dbReference type="HOGENOM" id="CLU_049611_1_1_9"/>
<dbReference type="OrthoDB" id="9791139at2"/>
<dbReference type="UniPathway" id="UPA00629">
    <property type="reaction ID" value="UER00684"/>
</dbReference>
<dbReference type="Proteomes" id="UP000001168">
    <property type="component" value="Chromosome"/>
</dbReference>
<dbReference type="GO" id="GO:0005737">
    <property type="term" value="C:cytoplasm"/>
    <property type="evidence" value="ECO:0007669"/>
    <property type="project" value="TreeGrafter"/>
</dbReference>
<dbReference type="GO" id="GO:0004342">
    <property type="term" value="F:glucosamine-6-phosphate deaminase activity"/>
    <property type="evidence" value="ECO:0007669"/>
    <property type="project" value="UniProtKB-UniRule"/>
</dbReference>
<dbReference type="GO" id="GO:0042802">
    <property type="term" value="F:identical protein binding"/>
    <property type="evidence" value="ECO:0007669"/>
    <property type="project" value="TreeGrafter"/>
</dbReference>
<dbReference type="GO" id="GO:0005975">
    <property type="term" value="P:carbohydrate metabolic process"/>
    <property type="evidence" value="ECO:0007669"/>
    <property type="project" value="InterPro"/>
</dbReference>
<dbReference type="GO" id="GO:0006043">
    <property type="term" value="P:glucosamine catabolic process"/>
    <property type="evidence" value="ECO:0007669"/>
    <property type="project" value="TreeGrafter"/>
</dbReference>
<dbReference type="GO" id="GO:0006046">
    <property type="term" value="P:N-acetylglucosamine catabolic process"/>
    <property type="evidence" value="ECO:0007669"/>
    <property type="project" value="TreeGrafter"/>
</dbReference>
<dbReference type="GO" id="GO:0019262">
    <property type="term" value="P:N-acetylneuraminate catabolic process"/>
    <property type="evidence" value="ECO:0007669"/>
    <property type="project" value="UniProtKB-UniRule"/>
</dbReference>
<dbReference type="CDD" id="cd01399">
    <property type="entry name" value="GlcN6P_deaminase"/>
    <property type="match status" value="1"/>
</dbReference>
<dbReference type="FunFam" id="3.40.50.1360:FF:000003">
    <property type="entry name" value="Glucosamine-6-phosphate deaminase"/>
    <property type="match status" value="1"/>
</dbReference>
<dbReference type="Gene3D" id="3.40.50.1360">
    <property type="match status" value="1"/>
</dbReference>
<dbReference type="HAMAP" id="MF_01241">
    <property type="entry name" value="GlcN6P_deamin"/>
    <property type="match status" value="1"/>
</dbReference>
<dbReference type="InterPro" id="IPR006148">
    <property type="entry name" value="Glc/Gal-6P_isomerase"/>
</dbReference>
<dbReference type="InterPro" id="IPR004547">
    <property type="entry name" value="Glucosamine6P_isomerase"/>
</dbReference>
<dbReference type="InterPro" id="IPR018321">
    <property type="entry name" value="Glucosamine6P_isomerase_CS"/>
</dbReference>
<dbReference type="InterPro" id="IPR037171">
    <property type="entry name" value="NagB/RpiA_transferase-like"/>
</dbReference>
<dbReference type="NCBIfam" id="TIGR00502">
    <property type="entry name" value="nagB"/>
    <property type="match status" value="1"/>
</dbReference>
<dbReference type="PANTHER" id="PTHR11280">
    <property type="entry name" value="GLUCOSAMINE-6-PHOSPHATE ISOMERASE"/>
    <property type="match status" value="1"/>
</dbReference>
<dbReference type="PANTHER" id="PTHR11280:SF5">
    <property type="entry name" value="GLUCOSAMINE-6-PHOSPHATE ISOMERASE"/>
    <property type="match status" value="1"/>
</dbReference>
<dbReference type="Pfam" id="PF01182">
    <property type="entry name" value="Glucosamine_iso"/>
    <property type="match status" value="1"/>
</dbReference>
<dbReference type="SUPFAM" id="SSF100950">
    <property type="entry name" value="NagB/RpiA/CoA transferase-like"/>
    <property type="match status" value="1"/>
</dbReference>
<dbReference type="PROSITE" id="PS01161">
    <property type="entry name" value="GLC_GALNAC_ISOMERASE"/>
    <property type="match status" value="1"/>
</dbReference>
<keyword id="KW-0119">Carbohydrate metabolism</keyword>
<keyword id="KW-0378">Hydrolase</keyword>
<keyword id="KW-1185">Reference proteome</keyword>
<comment type="function">
    <text evidence="1">Catalyzes the reversible isomerization-deamination of glucosamine 6-phosphate (GlcN6P) to form fructose 6-phosphate (Fru6P) and ammonium ion.</text>
</comment>
<comment type="catalytic activity">
    <reaction evidence="1">
        <text>alpha-D-glucosamine 6-phosphate + H2O = beta-D-fructose 6-phosphate + NH4(+)</text>
        <dbReference type="Rhea" id="RHEA:12172"/>
        <dbReference type="ChEBI" id="CHEBI:15377"/>
        <dbReference type="ChEBI" id="CHEBI:28938"/>
        <dbReference type="ChEBI" id="CHEBI:57634"/>
        <dbReference type="ChEBI" id="CHEBI:75989"/>
        <dbReference type="EC" id="3.5.99.6"/>
    </reaction>
</comment>
<comment type="pathway">
    <text evidence="1">Amino-sugar metabolism; N-acetylneuraminate degradation; D-fructose 6-phosphate from N-acetylneuraminate: step 5/5.</text>
</comment>
<comment type="similarity">
    <text evidence="1">Belongs to the glucosamine/galactosamine-6-phosphate isomerase family. NagB subfamily.</text>
</comment>
<name>NAGB_SHOC1</name>
<gene>
    <name evidence="1" type="primary">nagB</name>
    <name type="ordered locus">ABC1490</name>
</gene>
<organism>
    <name type="scientific">Shouchella clausii (strain KSM-K16)</name>
    <name type="common">Alkalihalobacillus clausii</name>
    <dbReference type="NCBI Taxonomy" id="66692"/>
    <lineage>
        <taxon>Bacteria</taxon>
        <taxon>Bacillati</taxon>
        <taxon>Bacillota</taxon>
        <taxon>Bacilli</taxon>
        <taxon>Bacillales</taxon>
        <taxon>Bacillaceae</taxon>
        <taxon>Shouchella</taxon>
    </lineage>
</organism>
<reference key="1">
    <citation type="submission" date="2003-10" db="EMBL/GenBank/DDBJ databases">
        <title>The complete genome sequence of the alkaliphilic Bacillus clausii KSM-K16.</title>
        <authorList>
            <person name="Takaki Y."/>
            <person name="Kageyama Y."/>
            <person name="Shimamura S."/>
            <person name="Suzuki H."/>
            <person name="Nishi S."/>
            <person name="Hatada Y."/>
            <person name="Kawai S."/>
            <person name="Ito S."/>
            <person name="Horikoshi K."/>
        </authorList>
    </citation>
    <scope>NUCLEOTIDE SEQUENCE [LARGE SCALE GENOMIC DNA]</scope>
    <source>
        <strain>KSM-K16</strain>
    </source>
</reference>